<keyword id="KW-0056">Arginine metabolism</keyword>
<keyword id="KW-0378">Hydrolase</keyword>
<keyword id="KW-0479">Metal-binding</keyword>
<keyword id="KW-1185">Reference proteome</keyword>
<keyword id="KW-0862">Zinc</keyword>
<protein>
    <recommendedName>
        <fullName evidence="1">Succinylglutamate desuccinylase</fullName>
        <ecNumber evidence="1">3.5.1.96</ecNumber>
    </recommendedName>
</protein>
<feature type="chain" id="PRO_1000017321" description="Succinylglutamate desuccinylase">
    <location>
        <begin position="1"/>
        <end position="322"/>
    </location>
</feature>
<feature type="active site" evidence="1">
    <location>
        <position position="210"/>
    </location>
</feature>
<feature type="binding site" evidence="1">
    <location>
        <position position="53"/>
    </location>
    <ligand>
        <name>Zn(2+)</name>
        <dbReference type="ChEBI" id="CHEBI:29105"/>
    </ligand>
</feature>
<feature type="binding site" evidence="1">
    <location>
        <position position="56"/>
    </location>
    <ligand>
        <name>Zn(2+)</name>
        <dbReference type="ChEBI" id="CHEBI:29105"/>
    </ligand>
</feature>
<feature type="binding site" evidence="1">
    <location>
        <position position="147"/>
    </location>
    <ligand>
        <name>Zn(2+)</name>
        <dbReference type="ChEBI" id="CHEBI:29105"/>
    </ligand>
</feature>
<evidence type="ECO:0000255" key="1">
    <source>
        <dbReference type="HAMAP-Rule" id="MF_00767"/>
    </source>
</evidence>
<organism>
    <name type="scientific">Citrobacter koseri (strain ATCC BAA-895 / CDC 4225-83 / SGSC4696)</name>
    <dbReference type="NCBI Taxonomy" id="290338"/>
    <lineage>
        <taxon>Bacteria</taxon>
        <taxon>Pseudomonadati</taxon>
        <taxon>Pseudomonadota</taxon>
        <taxon>Gammaproteobacteria</taxon>
        <taxon>Enterobacterales</taxon>
        <taxon>Enterobacteriaceae</taxon>
        <taxon>Citrobacter</taxon>
    </lineage>
</organism>
<gene>
    <name evidence="1" type="primary">astE</name>
    <name type="ordered locus">CKO_01770</name>
</gene>
<proteinExistence type="inferred from homology"/>
<comment type="function">
    <text evidence="1">Transforms N(2)-succinylglutamate into succinate and glutamate.</text>
</comment>
<comment type="catalytic activity">
    <reaction evidence="1">
        <text>N-succinyl-L-glutamate + H2O = L-glutamate + succinate</text>
        <dbReference type="Rhea" id="RHEA:15169"/>
        <dbReference type="ChEBI" id="CHEBI:15377"/>
        <dbReference type="ChEBI" id="CHEBI:29985"/>
        <dbReference type="ChEBI" id="CHEBI:30031"/>
        <dbReference type="ChEBI" id="CHEBI:58763"/>
        <dbReference type="EC" id="3.5.1.96"/>
    </reaction>
</comment>
<comment type="cofactor">
    <cofactor evidence="1">
        <name>Zn(2+)</name>
        <dbReference type="ChEBI" id="CHEBI:29105"/>
    </cofactor>
    <text evidence="1">Binds 1 zinc ion per subunit.</text>
</comment>
<comment type="pathway">
    <text evidence="1">Amino-acid degradation; L-arginine degradation via AST pathway; L-glutamate and succinate from L-arginine: step 5/5.</text>
</comment>
<comment type="similarity">
    <text evidence="1">Belongs to the AspA/AstE family. Succinylglutamate desuccinylase subfamily.</text>
</comment>
<dbReference type="EC" id="3.5.1.96" evidence="1"/>
<dbReference type="EMBL" id="CP000822">
    <property type="protein sequence ID" value="ABV12899.1"/>
    <property type="molecule type" value="Genomic_DNA"/>
</dbReference>
<dbReference type="RefSeq" id="WP_012132636.1">
    <property type="nucleotide sequence ID" value="NC_009792.1"/>
</dbReference>
<dbReference type="SMR" id="A8AHD6"/>
<dbReference type="STRING" id="290338.CKO_01770"/>
<dbReference type="GeneID" id="45135792"/>
<dbReference type="KEGG" id="cko:CKO_01770"/>
<dbReference type="HOGENOM" id="CLU_071608_0_0_6"/>
<dbReference type="OrthoDB" id="5290473at2"/>
<dbReference type="UniPathway" id="UPA00185">
    <property type="reaction ID" value="UER00283"/>
</dbReference>
<dbReference type="Proteomes" id="UP000008148">
    <property type="component" value="Chromosome"/>
</dbReference>
<dbReference type="GO" id="GO:0016788">
    <property type="term" value="F:hydrolase activity, acting on ester bonds"/>
    <property type="evidence" value="ECO:0007669"/>
    <property type="project" value="UniProtKB-UniRule"/>
</dbReference>
<dbReference type="GO" id="GO:0009017">
    <property type="term" value="F:succinylglutamate desuccinylase activity"/>
    <property type="evidence" value="ECO:0007669"/>
    <property type="project" value="UniProtKB-EC"/>
</dbReference>
<dbReference type="GO" id="GO:0008270">
    <property type="term" value="F:zinc ion binding"/>
    <property type="evidence" value="ECO:0007669"/>
    <property type="project" value="UniProtKB-UniRule"/>
</dbReference>
<dbReference type="GO" id="GO:0019544">
    <property type="term" value="P:arginine catabolic process to glutamate"/>
    <property type="evidence" value="ECO:0007669"/>
    <property type="project" value="UniProtKB-UniRule"/>
</dbReference>
<dbReference type="GO" id="GO:0019545">
    <property type="term" value="P:arginine catabolic process to succinate"/>
    <property type="evidence" value="ECO:0007669"/>
    <property type="project" value="UniProtKB-UniRule"/>
</dbReference>
<dbReference type="CDD" id="cd03855">
    <property type="entry name" value="M14_ASTE"/>
    <property type="match status" value="1"/>
</dbReference>
<dbReference type="FunFam" id="3.40.630.10:FF:000017">
    <property type="entry name" value="Succinylglutamate desuccinylase"/>
    <property type="match status" value="1"/>
</dbReference>
<dbReference type="Gene3D" id="3.40.630.10">
    <property type="entry name" value="Zn peptidases"/>
    <property type="match status" value="1"/>
</dbReference>
<dbReference type="HAMAP" id="MF_00767">
    <property type="entry name" value="Arg_catab_AstE"/>
    <property type="match status" value="1"/>
</dbReference>
<dbReference type="InterPro" id="IPR050178">
    <property type="entry name" value="AspA/AstE_fam"/>
</dbReference>
<dbReference type="InterPro" id="IPR055438">
    <property type="entry name" value="AstE_AspA_cat"/>
</dbReference>
<dbReference type="InterPro" id="IPR007036">
    <property type="entry name" value="Aste_AspA_hybrid_dom"/>
</dbReference>
<dbReference type="InterPro" id="IPR016681">
    <property type="entry name" value="SuccinylGlu_desuccinylase"/>
</dbReference>
<dbReference type="NCBIfam" id="TIGR03242">
    <property type="entry name" value="arg_catab_astE"/>
    <property type="match status" value="1"/>
</dbReference>
<dbReference type="NCBIfam" id="NF003706">
    <property type="entry name" value="PRK05324.1"/>
    <property type="match status" value="1"/>
</dbReference>
<dbReference type="PANTHER" id="PTHR15162">
    <property type="entry name" value="ASPARTOACYLASE"/>
    <property type="match status" value="1"/>
</dbReference>
<dbReference type="PANTHER" id="PTHR15162:SF7">
    <property type="entry name" value="SUCCINYLGLUTAMATE DESUCCINYLASE"/>
    <property type="match status" value="1"/>
</dbReference>
<dbReference type="Pfam" id="PF24827">
    <property type="entry name" value="AstE_AspA_cat"/>
    <property type="match status" value="1"/>
</dbReference>
<dbReference type="Pfam" id="PF04952">
    <property type="entry name" value="AstE_AspA_hybrid"/>
    <property type="match status" value="1"/>
</dbReference>
<dbReference type="PIRSF" id="PIRSF017020">
    <property type="entry name" value="AstE"/>
    <property type="match status" value="1"/>
</dbReference>
<dbReference type="SUPFAM" id="SSF53187">
    <property type="entry name" value="Zn-dependent exopeptidases"/>
    <property type="match status" value="1"/>
</dbReference>
<accession>A8AHD6</accession>
<sequence length="322" mass="36046">MDNFLAQTLAGISPDITQGETESFHWRWQMPGVLELTPAVEVDRALVLSAGIHGNETAPVEMLAALLSALFEGKIPLRWRLLVILGNPPALAEGVRYCHSDMNRMFGGRWQMFEESGETLRARELEQLLEDFYSRRKTRIRWHLDLHTAIRGSRHVRFGVLPQRSIPWDEHFLSWLGAAGLEALVFHQTPGGTFTHFSCEHFGALSCTLELGKALPFGHNDLTQFTPTAQALATLLAGEKPMEGGTRPIRYRVVAQITRRSDAFVLCMDNQTLNFTPFKKGTLLAQDGDEQVIVTHDVEYVLFPNPNVACGLRAGLMLEKLA</sequence>
<name>ASTE_CITK8</name>
<reference key="1">
    <citation type="submission" date="2007-08" db="EMBL/GenBank/DDBJ databases">
        <authorList>
            <consortium name="The Citrobacter koseri Genome Sequencing Project"/>
            <person name="McClelland M."/>
            <person name="Sanderson E.K."/>
            <person name="Porwollik S."/>
            <person name="Spieth J."/>
            <person name="Clifton W.S."/>
            <person name="Latreille P."/>
            <person name="Courtney L."/>
            <person name="Wang C."/>
            <person name="Pepin K."/>
            <person name="Bhonagiri V."/>
            <person name="Nash W."/>
            <person name="Johnson M."/>
            <person name="Thiruvilangam P."/>
            <person name="Wilson R."/>
        </authorList>
    </citation>
    <scope>NUCLEOTIDE SEQUENCE [LARGE SCALE GENOMIC DNA]</scope>
    <source>
        <strain>ATCC BAA-895 / CDC 4225-83 / SGSC4696</strain>
    </source>
</reference>